<name>DGGGP_THEON</name>
<gene>
    <name type="ordered locus">TON_1950</name>
</gene>
<accession>B6YW76</accession>
<protein>
    <recommendedName>
        <fullName evidence="1">Digeranylgeranylglyceryl phosphate synthase</fullName>
        <shortName evidence="1">DGGGP synthase</shortName>
        <shortName evidence="1">DGGGPS</shortName>
        <ecNumber evidence="1">2.5.1.42</ecNumber>
    </recommendedName>
    <alternativeName>
        <fullName evidence="1">(S)-2,3-di-O-geranylgeranylglyceryl phosphate synthase</fullName>
    </alternativeName>
    <alternativeName>
        <fullName evidence="1">Geranylgeranylglycerol-phosphate geranylgeranyltransferase</fullName>
    </alternativeName>
</protein>
<evidence type="ECO:0000255" key="1">
    <source>
        <dbReference type="HAMAP-Rule" id="MF_01286"/>
    </source>
</evidence>
<reference key="1">
    <citation type="journal article" date="2008" name="J. Bacteriol.">
        <title>The complete genome sequence of Thermococcus onnurineus NA1 reveals a mixed heterotrophic and carboxydotrophic metabolism.</title>
        <authorList>
            <person name="Lee H.S."/>
            <person name="Kang S.G."/>
            <person name="Bae S.S."/>
            <person name="Lim J.K."/>
            <person name="Cho Y."/>
            <person name="Kim Y.J."/>
            <person name="Jeon J.H."/>
            <person name="Cha S.-S."/>
            <person name="Kwon K.K."/>
            <person name="Kim H.-T."/>
            <person name="Park C.-J."/>
            <person name="Lee H.-W."/>
            <person name="Kim S.I."/>
            <person name="Chun J."/>
            <person name="Colwell R.R."/>
            <person name="Kim S.-J."/>
            <person name="Lee J.-H."/>
        </authorList>
    </citation>
    <scope>NUCLEOTIDE SEQUENCE [LARGE SCALE GENOMIC DNA]</scope>
    <source>
        <strain>NA1</strain>
    </source>
</reference>
<sequence length="276" mass="29958">MELKAFIEITRPHNCILAGIVGLLGSIVALGHFPDPKTALLIFLVVTVGCAGGNTINDYFDYEIDKINRPERPLPRGAMGRKVALYYSMLLFAVGLALAYMINIYAFILGVIAYVTMFIYAWKLKPLPFVGNIVVAGLTGATPLYGAVAVEHLGLAGYLAICAFLVNVAREVIKDIEDVEGDMAKGAKTLPIIWGKKRAAYVGVLFALLTVIASFLPVKASVGVGYYAMVPVDLLILYAAYLILRNQDREVAHKSQKLLKMSIFLAVMAFLIAAIV</sequence>
<proteinExistence type="inferred from homology"/>
<comment type="function">
    <text evidence="1">Prenyltransferase that catalyzes the transfer of the geranylgeranyl moiety of geranylgeranyl diphosphate (GGPP) to the C2 hydroxyl of (S)-3-O-geranylgeranylglyceryl phosphate (GGGP). This reaction is the second ether-bond-formation step in the biosynthesis of archaeal membrane lipids.</text>
</comment>
<comment type="catalytic activity">
    <reaction evidence="1">
        <text>sn-3-O-(geranylgeranyl)glycerol 1-phosphate + (2E,6E,10E)-geranylgeranyl diphosphate = 2,3-bis-O-(geranylgeranyl)-sn-glycerol 1-phosphate + diphosphate</text>
        <dbReference type="Rhea" id="RHEA:18109"/>
        <dbReference type="ChEBI" id="CHEBI:33019"/>
        <dbReference type="ChEBI" id="CHEBI:57677"/>
        <dbReference type="ChEBI" id="CHEBI:58756"/>
        <dbReference type="ChEBI" id="CHEBI:58837"/>
        <dbReference type="EC" id="2.5.1.42"/>
    </reaction>
</comment>
<comment type="cofactor">
    <cofactor evidence="1">
        <name>Mg(2+)</name>
        <dbReference type="ChEBI" id="CHEBI:18420"/>
    </cofactor>
</comment>
<comment type="pathway">
    <text evidence="1">Membrane lipid metabolism; glycerophospholipid metabolism.</text>
</comment>
<comment type="subcellular location">
    <subcellularLocation>
        <location evidence="1">Cell membrane</location>
        <topology evidence="1">Multi-pass membrane protein</topology>
    </subcellularLocation>
</comment>
<comment type="similarity">
    <text evidence="1">Belongs to the UbiA prenyltransferase family. DGGGP synthase subfamily.</text>
</comment>
<organism>
    <name type="scientific">Thermococcus onnurineus (strain NA1)</name>
    <dbReference type="NCBI Taxonomy" id="523850"/>
    <lineage>
        <taxon>Archaea</taxon>
        <taxon>Methanobacteriati</taxon>
        <taxon>Methanobacteriota</taxon>
        <taxon>Thermococci</taxon>
        <taxon>Thermococcales</taxon>
        <taxon>Thermococcaceae</taxon>
        <taxon>Thermococcus</taxon>
    </lineage>
</organism>
<dbReference type="EC" id="2.5.1.42" evidence="1"/>
<dbReference type="EMBL" id="CP000855">
    <property type="protein sequence ID" value="ACJ17442.1"/>
    <property type="molecule type" value="Genomic_DNA"/>
</dbReference>
<dbReference type="RefSeq" id="WP_012572913.1">
    <property type="nucleotide sequence ID" value="NC_011529.1"/>
</dbReference>
<dbReference type="SMR" id="B6YW76"/>
<dbReference type="STRING" id="523850.TON_1950"/>
<dbReference type="GeneID" id="7017625"/>
<dbReference type="KEGG" id="ton:TON_1950"/>
<dbReference type="PATRIC" id="fig|523850.10.peg.1965"/>
<dbReference type="eggNOG" id="arCOG00476">
    <property type="taxonomic scope" value="Archaea"/>
</dbReference>
<dbReference type="HOGENOM" id="CLU_073311_1_1_2"/>
<dbReference type="OrthoDB" id="11851at2157"/>
<dbReference type="UniPathway" id="UPA00940"/>
<dbReference type="Proteomes" id="UP000002727">
    <property type="component" value="Chromosome"/>
</dbReference>
<dbReference type="GO" id="GO:0005886">
    <property type="term" value="C:plasma membrane"/>
    <property type="evidence" value="ECO:0007669"/>
    <property type="project" value="UniProtKB-SubCell"/>
</dbReference>
<dbReference type="GO" id="GO:0047295">
    <property type="term" value="F:geranylgeranylglycerol-phosphate geranylgeranyltransferase activity"/>
    <property type="evidence" value="ECO:0007669"/>
    <property type="project" value="UniProtKB-UniRule"/>
</dbReference>
<dbReference type="GO" id="GO:0000287">
    <property type="term" value="F:magnesium ion binding"/>
    <property type="evidence" value="ECO:0007669"/>
    <property type="project" value="UniProtKB-UniRule"/>
</dbReference>
<dbReference type="GO" id="GO:0046474">
    <property type="term" value="P:glycerophospholipid biosynthetic process"/>
    <property type="evidence" value="ECO:0007669"/>
    <property type="project" value="UniProtKB-UniRule"/>
</dbReference>
<dbReference type="CDD" id="cd13961">
    <property type="entry name" value="PT_UbiA_DGGGPS"/>
    <property type="match status" value="1"/>
</dbReference>
<dbReference type="Gene3D" id="1.10.357.140">
    <property type="entry name" value="UbiA prenyltransferase"/>
    <property type="match status" value="1"/>
</dbReference>
<dbReference type="Gene3D" id="1.20.120.1780">
    <property type="entry name" value="UbiA prenyltransferase"/>
    <property type="match status" value="1"/>
</dbReference>
<dbReference type="HAMAP" id="MF_01286">
    <property type="entry name" value="DGGGP_synth"/>
    <property type="match status" value="1"/>
</dbReference>
<dbReference type="InterPro" id="IPR023547">
    <property type="entry name" value="DGGGP_synth"/>
</dbReference>
<dbReference type="InterPro" id="IPR050475">
    <property type="entry name" value="Prenyltransferase_related"/>
</dbReference>
<dbReference type="InterPro" id="IPR000537">
    <property type="entry name" value="UbiA_prenyltransferase"/>
</dbReference>
<dbReference type="InterPro" id="IPR044878">
    <property type="entry name" value="UbiA_sf"/>
</dbReference>
<dbReference type="NCBIfam" id="NF009522">
    <property type="entry name" value="PRK12883.1"/>
    <property type="match status" value="1"/>
</dbReference>
<dbReference type="PANTHER" id="PTHR42723">
    <property type="entry name" value="CHLOROPHYLL SYNTHASE"/>
    <property type="match status" value="1"/>
</dbReference>
<dbReference type="PANTHER" id="PTHR42723:SF1">
    <property type="entry name" value="CHLOROPHYLL SYNTHASE, CHLOROPLASTIC"/>
    <property type="match status" value="1"/>
</dbReference>
<dbReference type="Pfam" id="PF01040">
    <property type="entry name" value="UbiA"/>
    <property type="match status" value="1"/>
</dbReference>
<keyword id="KW-1003">Cell membrane</keyword>
<keyword id="KW-0444">Lipid biosynthesis</keyword>
<keyword id="KW-0443">Lipid metabolism</keyword>
<keyword id="KW-0460">Magnesium</keyword>
<keyword id="KW-0472">Membrane</keyword>
<keyword id="KW-0594">Phospholipid biosynthesis</keyword>
<keyword id="KW-1208">Phospholipid metabolism</keyword>
<keyword id="KW-0808">Transferase</keyword>
<keyword id="KW-0812">Transmembrane</keyword>
<keyword id="KW-1133">Transmembrane helix</keyword>
<feature type="chain" id="PRO_1000140371" description="Digeranylgeranylglyceryl phosphate synthase">
    <location>
        <begin position="1"/>
        <end position="276"/>
    </location>
</feature>
<feature type="transmembrane region" description="Helical" evidence="1">
    <location>
        <begin position="14"/>
        <end position="34"/>
    </location>
</feature>
<feature type="transmembrane region" description="Helical" evidence="1">
    <location>
        <begin position="40"/>
        <end position="60"/>
    </location>
</feature>
<feature type="transmembrane region" description="Helical" evidence="1">
    <location>
        <begin position="92"/>
        <end position="112"/>
    </location>
</feature>
<feature type="transmembrane region" description="Helical" evidence="1">
    <location>
        <begin position="146"/>
        <end position="166"/>
    </location>
</feature>
<feature type="transmembrane region" description="Helical" evidence="1">
    <location>
        <begin position="202"/>
        <end position="222"/>
    </location>
</feature>
<feature type="transmembrane region" description="Helical" evidence="1">
    <location>
        <begin position="224"/>
        <end position="244"/>
    </location>
</feature>
<feature type="transmembrane region" description="Helical" evidence="1">
    <location>
        <begin position="256"/>
        <end position="276"/>
    </location>
</feature>